<comment type="function">
    <text evidence="2">Plays a key role in the control of the eukaryotic cell cycle. Required for entry into S-phase and mitosis. p34 is a component of the kinase complex that phosphorylates the repetitive C-terminus of RNA polymerase II.</text>
</comment>
<comment type="catalytic activity">
    <reaction>
        <text>L-seryl-[protein] + ATP = O-phospho-L-seryl-[protein] + ADP + H(+)</text>
        <dbReference type="Rhea" id="RHEA:17989"/>
        <dbReference type="Rhea" id="RHEA-COMP:9863"/>
        <dbReference type="Rhea" id="RHEA-COMP:11604"/>
        <dbReference type="ChEBI" id="CHEBI:15378"/>
        <dbReference type="ChEBI" id="CHEBI:29999"/>
        <dbReference type="ChEBI" id="CHEBI:30616"/>
        <dbReference type="ChEBI" id="CHEBI:83421"/>
        <dbReference type="ChEBI" id="CHEBI:456216"/>
        <dbReference type="EC" id="2.7.11.22"/>
    </reaction>
</comment>
<comment type="catalytic activity">
    <reaction>
        <text>L-threonyl-[protein] + ATP = O-phospho-L-threonyl-[protein] + ADP + H(+)</text>
        <dbReference type="Rhea" id="RHEA:46608"/>
        <dbReference type="Rhea" id="RHEA-COMP:11060"/>
        <dbReference type="Rhea" id="RHEA-COMP:11605"/>
        <dbReference type="ChEBI" id="CHEBI:15378"/>
        <dbReference type="ChEBI" id="CHEBI:30013"/>
        <dbReference type="ChEBI" id="CHEBI:30616"/>
        <dbReference type="ChEBI" id="CHEBI:61977"/>
        <dbReference type="ChEBI" id="CHEBI:456216"/>
        <dbReference type="EC" id="2.7.11.22"/>
    </reaction>
</comment>
<comment type="catalytic activity">
    <reaction>
        <text>[DNA-directed RNA polymerase] + ATP = phospho-[DNA-directed RNA polymerase] + ADP + H(+)</text>
        <dbReference type="Rhea" id="RHEA:10216"/>
        <dbReference type="Rhea" id="RHEA-COMP:11321"/>
        <dbReference type="Rhea" id="RHEA-COMP:11322"/>
        <dbReference type="ChEBI" id="CHEBI:15378"/>
        <dbReference type="ChEBI" id="CHEBI:30616"/>
        <dbReference type="ChEBI" id="CHEBI:43176"/>
        <dbReference type="ChEBI" id="CHEBI:68546"/>
        <dbReference type="ChEBI" id="CHEBI:456216"/>
        <dbReference type="EC" id="2.7.11.23"/>
    </reaction>
</comment>
<comment type="activity regulation">
    <text evidence="1">Phosphorylation at Thr-20 or Tyr-21 inactivates the enzyme, while phosphorylation at Thr-162 activates it.</text>
</comment>
<comment type="subunit">
    <text>Forms a stable but non-covalent complex with a regulatory subunit and with a cyclin.</text>
</comment>
<comment type="similarity">
    <text evidence="5">Belongs to the protein kinase superfamily. CMGC Ser/Thr protein kinase family. CDC2/CDKX subfamily.</text>
</comment>
<accession>P34112</accession>
<accession>Q558T7</accession>
<name>CDK1_DICDI</name>
<sequence>MESDGGLSRYQKLEKLGEGTYGKVYKAKEKATGRMVALKKIRLEDDGVPSTALREISLLKEVPHPNVVSLFDVLHCQNRLYLVFEYLDQDLKKYMDSVPALCPQLIKSYLYQLLKGLAYSHGHRILHRDLKPQNLLIDRQGALKLADFGLARAVSIPVRVYTHEIVTLWYRAPEVLLGSKSYSVPVDMWSVGCIFGEMLNKKPLFSGDCEIDQIFRIFRVLGTPDDSIWPGVTKLPEYVSTFPNWPGQPYNKIFPRCEPLALDLIAKMLQYEPSKRISAKEALLHPYFGDLDTSFF</sequence>
<evidence type="ECO:0000250" key="1"/>
<evidence type="ECO:0000250" key="2">
    <source>
        <dbReference type="UniProtKB" id="P06493"/>
    </source>
</evidence>
<evidence type="ECO:0000255" key="3">
    <source>
        <dbReference type="PROSITE-ProRule" id="PRU00159"/>
    </source>
</evidence>
<evidence type="ECO:0000255" key="4">
    <source>
        <dbReference type="PROSITE-ProRule" id="PRU10027"/>
    </source>
</evidence>
<evidence type="ECO:0000305" key="5"/>
<feature type="chain" id="PRO_0000085739" description="Cyclin-dependent kinase 1">
    <location>
        <begin position="1"/>
        <end position="296"/>
    </location>
</feature>
<feature type="domain" description="Protein kinase" evidence="3">
    <location>
        <begin position="10"/>
        <end position="288"/>
    </location>
</feature>
<feature type="active site" description="Proton acceptor" evidence="3 4">
    <location>
        <position position="129"/>
    </location>
</feature>
<feature type="binding site" evidence="3">
    <location>
        <begin position="16"/>
        <end position="24"/>
    </location>
    <ligand>
        <name>ATP</name>
        <dbReference type="ChEBI" id="CHEBI:30616"/>
    </ligand>
</feature>
<feature type="binding site" evidence="3">
    <location>
        <position position="39"/>
    </location>
    <ligand>
        <name>ATP</name>
        <dbReference type="ChEBI" id="CHEBI:30616"/>
    </ligand>
</feature>
<feature type="modified residue" description="Phosphothreonine" evidence="1">
    <location>
        <position position="20"/>
    </location>
</feature>
<feature type="modified residue" description="Phosphotyrosine" evidence="1">
    <location>
        <position position="21"/>
    </location>
</feature>
<feature type="modified residue" description="Phosphothreonine; by CAK" evidence="1">
    <location>
        <position position="162"/>
    </location>
</feature>
<proteinExistence type="evidence at transcript level"/>
<protein>
    <recommendedName>
        <fullName>Cyclin-dependent kinase 1</fullName>
        <shortName>CDK1</shortName>
        <ecNumber>2.7.11.22</ecNumber>
        <ecNumber>2.7.11.23</ecNumber>
    </recommendedName>
    <alternativeName>
        <fullName>Cell division control protein 2 homolog</fullName>
    </alternativeName>
    <alternativeName>
        <fullName>Cell division protein kinase 1</fullName>
    </alternativeName>
    <alternativeName>
        <fullName>p34 protein kinase</fullName>
    </alternativeName>
</protein>
<keyword id="KW-0067">ATP-binding</keyword>
<keyword id="KW-0131">Cell cycle</keyword>
<keyword id="KW-0132">Cell division</keyword>
<keyword id="KW-0418">Kinase</keyword>
<keyword id="KW-0498">Mitosis</keyword>
<keyword id="KW-0547">Nucleotide-binding</keyword>
<keyword id="KW-0597">Phosphoprotein</keyword>
<keyword id="KW-1185">Reference proteome</keyword>
<keyword id="KW-0723">Serine/threonine-protein kinase</keyword>
<keyword id="KW-0808">Transferase</keyword>
<gene>
    <name type="primary">cdk1</name>
    <name type="synonym">cdcB</name>
    <name type="ORF">DDB_G0272813</name>
</gene>
<dbReference type="EC" id="2.7.11.22"/>
<dbReference type="EC" id="2.7.11.23"/>
<dbReference type="EMBL" id="M80808">
    <property type="protein sequence ID" value="AAA33178.1"/>
    <property type="molecule type" value="mRNA"/>
</dbReference>
<dbReference type="EMBL" id="AAFI02000008">
    <property type="protein sequence ID" value="EAL71044.1"/>
    <property type="molecule type" value="Genomic_DNA"/>
</dbReference>
<dbReference type="PIR" id="S24386">
    <property type="entry name" value="S24386"/>
</dbReference>
<dbReference type="RefSeq" id="XP_644979.1">
    <property type="nucleotide sequence ID" value="XM_639887.1"/>
</dbReference>
<dbReference type="SMR" id="P34112"/>
<dbReference type="FunCoup" id="P34112">
    <property type="interactions" value="7"/>
</dbReference>
<dbReference type="STRING" id="44689.P34112"/>
<dbReference type="PaxDb" id="44689-DDB0185028"/>
<dbReference type="EnsemblProtists" id="EAL71044">
    <property type="protein sequence ID" value="EAL71044"/>
    <property type="gene ID" value="DDB_G0272813"/>
</dbReference>
<dbReference type="GeneID" id="8618656"/>
<dbReference type="KEGG" id="ddi:DDB_G0272813"/>
<dbReference type="dictyBase" id="DDB_G0272813">
    <property type="gene designation" value="cdk1"/>
</dbReference>
<dbReference type="VEuPathDB" id="AmoebaDB:DDB_G0272813"/>
<dbReference type="eggNOG" id="KOG0594">
    <property type="taxonomic scope" value="Eukaryota"/>
</dbReference>
<dbReference type="HOGENOM" id="CLU_000288_181_1_1"/>
<dbReference type="InParanoid" id="P34112"/>
<dbReference type="OMA" id="WSLACIY"/>
<dbReference type="PhylomeDB" id="P34112"/>
<dbReference type="BRENDA" id="2.7.11.22">
    <property type="organism ID" value="1939"/>
</dbReference>
<dbReference type="Reactome" id="R-DDI-1538133">
    <property type="pathway name" value="G0 and Early G1"/>
</dbReference>
<dbReference type="Reactome" id="R-DDI-176408">
    <property type="pathway name" value="Regulation of APC/C activators between G1/S and early anaphase"/>
</dbReference>
<dbReference type="Reactome" id="R-DDI-2559582">
    <property type="pathway name" value="Senescence-Associated Secretory Phenotype (SASP)"/>
</dbReference>
<dbReference type="Reactome" id="R-DDI-3214858">
    <property type="pathway name" value="RMTs methylate histone arginines"/>
</dbReference>
<dbReference type="Reactome" id="R-DDI-68962">
    <property type="pathway name" value="Activation of the pre-replicative complex"/>
</dbReference>
<dbReference type="PRO" id="PR:P34112"/>
<dbReference type="Proteomes" id="UP000002195">
    <property type="component" value="Chromosome 2"/>
</dbReference>
<dbReference type="GO" id="GO:0000307">
    <property type="term" value="C:cyclin-dependent protein kinase holoenzyme complex"/>
    <property type="evidence" value="ECO:0000318"/>
    <property type="project" value="GO_Central"/>
</dbReference>
<dbReference type="GO" id="GO:0005737">
    <property type="term" value="C:cytoplasm"/>
    <property type="evidence" value="ECO:0000318"/>
    <property type="project" value="GO_Central"/>
</dbReference>
<dbReference type="GO" id="GO:0034399">
    <property type="term" value="C:nuclear periphery"/>
    <property type="evidence" value="ECO:0000314"/>
    <property type="project" value="dictyBase"/>
</dbReference>
<dbReference type="GO" id="GO:0005634">
    <property type="term" value="C:nucleus"/>
    <property type="evidence" value="ECO:0000318"/>
    <property type="project" value="GO_Central"/>
</dbReference>
<dbReference type="GO" id="GO:0005524">
    <property type="term" value="F:ATP binding"/>
    <property type="evidence" value="ECO:0000314"/>
    <property type="project" value="dictyBase"/>
</dbReference>
<dbReference type="GO" id="GO:0030332">
    <property type="term" value="F:cyclin binding"/>
    <property type="evidence" value="ECO:0000318"/>
    <property type="project" value="GO_Central"/>
</dbReference>
<dbReference type="GO" id="GO:0004693">
    <property type="term" value="F:cyclin-dependent protein serine/threonine kinase activity"/>
    <property type="evidence" value="ECO:0000314"/>
    <property type="project" value="dictyBase"/>
</dbReference>
<dbReference type="GO" id="GO:0106310">
    <property type="term" value="F:protein serine kinase activity"/>
    <property type="evidence" value="ECO:0007669"/>
    <property type="project" value="RHEA"/>
</dbReference>
<dbReference type="GO" id="GO:0008353">
    <property type="term" value="F:RNA polymerase II CTD heptapeptide repeat kinase activity"/>
    <property type="evidence" value="ECO:0007669"/>
    <property type="project" value="UniProtKB-EC"/>
</dbReference>
<dbReference type="GO" id="GO:0051301">
    <property type="term" value="P:cell division"/>
    <property type="evidence" value="ECO:0007669"/>
    <property type="project" value="UniProtKB-KW"/>
</dbReference>
<dbReference type="GO" id="GO:0072766">
    <property type="term" value="P:centromere clustering at the mitotic interphase nuclear envelope"/>
    <property type="evidence" value="ECO:0000314"/>
    <property type="project" value="dictyBase"/>
</dbReference>
<dbReference type="GO" id="GO:0000082">
    <property type="term" value="P:G1/S transition of mitotic cell cycle"/>
    <property type="evidence" value="ECO:0000318"/>
    <property type="project" value="GO_Central"/>
</dbReference>
<dbReference type="GO" id="GO:0051726">
    <property type="term" value="P:regulation of cell cycle"/>
    <property type="evidence" value="ECO:0000316"/>
    <property type="project" value="dictyBase"/>
</dbReference>
<dbReference type="GO" id="GO:0010389">
    <property type="term" value="P:regulation of G2/M transition of mitotic cell cycle"/>
    <property type="evidence" value="ECO:0000318"/>
    <property type="project" value="GO_Central"/>
</dbReference>
<dbReference type="GO" id="GO:0010468">
    <property type="term" value="P:regulation of gene expression"/>
    <property type="evidence" value="ECO:0000318"/>
    <property type="project" value="GO_Central"/>
</dbReference>
<dbReference type="GO" id="GO:0030842">
    <property type="term" value="P:regulation of intermediate filament depolymerization"/>
    <property type="evidence" value="ECO:0000315"/>
    <property type="project" value="dictyBase"/>
</dbReference>
<dbReference type="GO" id="GO:0007165">
    <property type="term" value="P:signal transduction"/>
    <property type="evidence" value="ECO:0000318"/>
    <property type="project" value="GO_Central"/>
</dbReference>
<dbReference type="CDD" id="cd07835">
    <property type="entry name" value="STKc_CDK1_CdkB_like"/>
    <property type="match status" value="1"/>
</dbReference>
<dbReference type="FunFam" id="3.30.200.20:FF:000375">
    <property type="entry name" value="Cell division related protein kinase 2"/>
    <property type="match status" value="1"/>
</dbReference>
<dbReference type="FunFam" id="1.10.510.10:FF:000281">
    <property type="entry name" value="Cyclin-dependent kinase 2"/>
    <property type="match status" value="1"/>
</dbReference>
<dbReference type="Gene3D" id="3.30.200.20">
    <property type="entry name" value="Phosphorylase Kinase, domain 1"/>
    <property type="match status" value="1"/>
</dbReference>
<dbReference type="Gene3D" id="1.10.510.10">
    <property type="entry name" value="Transferase(Phosphotransferase) domain 1"/>
    <property type="match status" value="1"/>
</dbReference>
<dbReference type="InterPro" id="IPR050108">
    <property type="entry name" value="CDK"/>
</dbReference>
<dbReference type="InterPro" id="IPR011009">
    <property type="entry name" value="Kinase-like_dom_sf"/>
</dbReference>
<dbReference type="InterPro" id="IPR000719">
    <property type="entry name" value="Prot_kinase_dom"/>
</dbReference>
<dbReference type="InterPro" id="IPR017441">
    <property type="entry name" value="Protein_kinase_ATP_BS"/>
</dbReference>
<dbReference type="InterPro" id="IPR008271">
    <property type="entry name" value="Ser/Thr_kinase_AS"/>
</dbReference>
<dbReference type="PANTHER" id="PTHR24056">
    <property type="entry name" value="CELL DIVISION PROTEIN KINASE"/>
    <property type="match status" value="1"/>
</dbReference>
<dbReference type="PANTHER" id="PTHR24056:SF254">
    <property type="entry name" value="CYCLIN-DEPENDENT KINASE 2"/>
    <property type="match status" value="1"/>
</dbReference>
<dbReference type="Pfam" id="PF00069">
    <property type="entry name" value="Pkinase"/>
    <property type="match status" value="1"/>
</dbReference>
<dbReference type="SMART" id="SM00220">
    <property type="entry name" value="S_TKc"/>
    <property type="match status" value="1"/>
</dbReference>
<dbReference type="SUPFAM" id="SSF56112">
    <property type="entry name" value="Protein kinase-like (PK-like)"/>
    <property type="match status" value="1"/>
</dbReference>
<dbReference type="PROSITE" id="PS00107">
    <property type="entry name" value="PROTEIN_KINASE_ATP"/>
    <property type="match status" value="1"/>
</dbReference>
<dbReference type="PROSITE" id="PS50011">
    <property type="entry name" value="PROTEIN_KINASE_DOM"/>
    <property type="match status" value="1"/>
</dbReference>
<dbReference type="PROSITE" id="PS00108">
    <property type="entry name" value="PROTEIN_KINASE_ST"/>
    <property type="match status" value="1"/>
</dbReference>
<organism>
    <name type="scientific">Dictyostelium discoideum</name>
    <name type="common">Social amoeba</name>
    <dbReference type="NCBI Taxonomy" id="44689"/>
    <lineage>
        <taxon>Eukaryota</taxon>
        <taxon>Amoebozoa</taxon>
        <taxon>Evosea</taxon>
        <taxon>Eumycetozoa</taxon>
        <taxon>Dictyostelia</taxon>
        <taxon>Dictyosteliales</taxon>
        <taxon>Dictyosteliaceae</taxon>
        <taxon>Dictyostelium</taxon>
    </lineage>
</organism>
<reference key="1">
    <citation type="journal article" date="1992" name="Biochim. Biophys. Acta">
        <title>Isolation and characterization of a cdc 2 cDNA from Dictyostelium discoideum.</title>
        <authorList>
            <person name="Michaelis C.E."/>
            <person name="Weeks G."/>
        </authorList>
    </citation>
    <scope>NUCLEOTIDE SEQUENCE [MRNA]</scope>
</reference>
<reference key="2">
    <citation type="journal article" date="2002" name="Nature">
        <title>Sequence and analysis of chromosome 2 of Dictyostelium discoideum.</title>
        <authorList>
            <person name="Gloeckner G."/>
            <person name="Eichinger L."/>
            <person name="Szafranski K."/>
            <person name="Pachebat J.A."/>
            <person name="Bankier A.T."/>
            <person name="Dear P.H."/>
            <person name="Lehmann R."/>
            <person name="Baumgart C."/>
            <person name="Parra G."/>
            <person name="Abril J.F."/>
            <person name="Guigo R."/>
            <person name="Kumpf K."/>
            <person name="Tunggal B."/>
            <person name="Cox E.C."/>
            <person name="Quail M.A."/>
            <person name="Platzer M."/>
            <person name="Rosenthal A."/>
            <person name="Noegel A.A."/>
        </authorList>
    </citation>
    <scope>NUCLEOTIDE SEQUENCE [LARGE SCALE GENOMIC DNA]</scope>
    <source>
        <strain>AX4</strain>
    </source>
</reference>
<reference key="3">
    <citation type="journal article" date="2005" name="Nature">
        <title>The genome of the social amoeba Dictyostelium discoideum.</title>
        <authorList>
            <person name="Eichinger L."/>
            <person name="Pachebat J.A."/>
            <person name="Gloeckner G."/>
            <person name="Rajandream M.A."/>
            <person name="Sucgang R."/>
            <person name="Berriman M."/>
            <person name="Song J."/>
            <person name="Olsen R."/>
            <person name="Szafranski K."/>
            <person name="Xu Q."/>
            <person name="Tunggal B."/>
            <person name="Kummerfeld S."/>
            <person name="Madera M."/>
            <person name="Konfortov B.A."/>
            <person name="Rivero F."/>
            <person name="Bankier A.T."/>
            <person name="Lehmann R."/>
            <person name="Hamlin N."/>
            <person name="Davies R."/>
            <person name="Gaudet P."/>
            <person name="Fey P."/>
            <person name="Pilcher K."/>
            <person name="Chen G."/>
            <person name="Saunders D."/>
            <person name="Sodergren E.J."/>
            <person name="Davis P."/>
            <person name="Kerhornou A."/>
            <person name="Nie X."/>
            <person name="Hall N."/>
            <person name="Anjard C."/>
            <person name="Hemphill L."/>
            <person name="Bason N."/>
            <person name="Farbrother P."/>
            <person name="Desany B."/>
            <person name="Just E."/>
            <person name="Morio T."/>
            <person name="Rost R."/>
            <person name="Churcher C.M."/>
            <person name="Cooper J."/>
            <person name="Haydock S."/>
            <person name="van Driessche N."/>
            <person name="Cronin A."/>
            <person name="Goodhead I."/>
            <person name="Muzny D.M."/>
            <person name="Mourier T."/>
            <person name="Pain A."/>
            <person name="Lu M."/>
            <person name="Harper D."/>
            <person name="Lindsay R."/>
            <person name="Hauser H."/>
            <person name="James K.D."/>
            <person name="Quiles M."/>
            <person name="Madan Babu M."/>
            <person name="Saito T."/>
            <person name="Buchrieser C."/>
            <person name="Wardroper A."/>
            <person name="Felder M."/>
            <person name="Thangavelu M."/>
            <person name="Johnson D."/>
            <person name="Knights A."/>
            <person name="Loulseged H."/>
            <person name="Mungall K.L."/>
            <person name="Oliver K."/>
            <person name="Price C."/>
            <person name="Quail M.A."/>
            <person name="Urushihara H."/>
            <person name="Hernandez J."/>
            <person name="Rabbinowitsch E."/>
            <person name="Steffen D."/>
            <person name="Sanders M."/>
            <person name="Ma J."/>
            <person name="Kohara Y."/>
            <person name="Sharp S."/>
            <person name="Simmonds M.N."/>
            <person name="Spiegler S."/>
            <person name="Tivey A."/>
            <person name="Sugano S."/>
            <person name="White B."/>
            <person name="Walker D."/>
            <person name="Woodward J.R."/>
            <person name="Winckler T."/>
            <person name="Tanaka Y."/>
            <person name="Shaulsky G."/>
            <person name="Schleicher M."/>
            <person name="Weinstock G.M."/>
            <person name="Rosenthal A."/>
            <person name="Cox E.C."/>
            <person name="Chisholm R.L."/>
            <person name="Gibbs R.A."/>
            <person name="Loomis W.F."/>
            <person name="Platzer M."/>
            <person name="Kay R.R."/>
            <person name="Williams J.G."/>
            <person name="Dear P.H."/>
            <person name="Noegel A.A."/>
            <person name="Barrell B.G."/>
            <person name="Kuspa A."/>
        </authorList>
    </citation>
    <scope>NUCLEOTIDE SEQUENCE [LARGE SCALE GENOMIC DNA]</scope>
    <source>
        <strain>AX4</strain>
    </source>
</reference>